<reference key="1">
    <citation type="journal article" date="2007" name="Genome Biol.">
        <title>Characterization and modeling of the Haemophilus influenzae core and supragenomes based on the complete genomic sequences of Rd and 12 clinical nontypeable strains.</title>
        <authorList>
            <person name="Hogg J.S."/>
            <person name="Hu F.Z."/>
            <person name="Janto B."/>
            <person name="Boissy R."/>
            <person name="Hayes J."/>
            <person name="Keefe R."/>
            <person name="Post J.C."/>
            <person name="Ehrlich G.D."/>
        </authorList>
    </citation>
    <scope>NUCLEOTIDE SEQUENCE [LARGE SCALE GENOMIC DNA]</scope>
    <source>
        <strain>PittGG</strain>
    </source>
</reference>
<sequence length="208" mass="22363">MIGLVGRKVGMTRIFNEDGVSVPVTVIEIEANRVTQVKTLENDGYTAVQVTTGSKKANRVTKPEAGHFVKAGVEAGRGLWEFRTEGEEFTLGQEINVDIFADVKKVDVTGTSKGKGFQGGVKRWNFRTQDATHGNSLSHRVLGSIGQNQTPGRVFKGKKMAGHLGAERVTVQSLEVVRVDAERKLLLVKGSVPGAINGNVIVKPAVKA</sequence>
<comment type="function">
    <text evidence="1">One of the primary rRNA binding proteins, it binds directly near the 3'-end of the 23S rRNA, where it nucleates assembly of the 50S subunit.</text>
</comment>
<comment type="subunit">
    <text evidence="1">Part of the 50S ribosomal subunit. Forms a cluster with proteins L14 and L19.</text>
</comment>
<comment type="PTM">
    <text evidence="1">Methylated by PrmB.</text>
</comment>
<comment type="similarity">
    <text evidence="1">Belongs to the universal ribosomal protein uL3 family.</text>
</comment>
<gene>
    <name evidence="1" type="primary">rplC</name>
    <name type="ordered locus">CGSHiGG_07385</name>
</gene>
<proteinExistence type="inferred from homology"/>
<accession>A5UHT0</accession>
<protein>
    <recommendedName>
        <fullName evidence="1">Large ribosomal subunit protein uL3</fullName>
    </recommendedName>
    <alternativeName>
        <fullName evidence="2">50S ribosomal protein L3</fullName>
    </alternativeName>
</protein>
<name>RL3_HAEIG</name>
<organism>
    <name type="scientific">Haemophilus influenzae (strain PittGG)</name>
    <dbReference type="NCBI Taxonomy" id="374931"/>
    <lineage>
        <taxon>Bacteria</taxon>
        <taxon>Pseudomonadati</taxon>
        <taxon>Pseudomonadota</taxon>
        <taxon>Gammaproteobacteria</taxon>
        <taxon>Pasteurellales</taxon>
        <taxon>Pasteurellaceae</taxon>
        <taxon>Haemophilus</taxon>
    </lineage>
</organism>
<dbReference type="EMBL" id="CP000672">
    <property type="protein sequence ID" value="ABR00336.1"/>
    <property type="molecule type" value="Genomic_DNA"/>
</dbReference>
<dbReference type="SMR" id="A5UHT0"/>
<dbReference type="KEGG" id="hiq:CGSHiGG_07385"/>
<dbReference type="HOGENOM" id="CLU_044142_4_1_6"/>
<dbReference type="Proteomes" id="UP000001990">
    <property type="component" value="Chromosome"/>
</dbReference>
<dbReference type="GO" id="GO:0022625">
    <property type="term" value="C:cytosolic large ribosomal subunit"/>
    <property type="evidence" value="ECO:0007669"/>
    <property type="project" value="TreeGrafter"/>
</dbReference>
<dbReference type="GO" id="GO:0019843">
    <property type="term" value="F:rRNA binding"/>
    <property type="evidence" value="ECO:0007669"/>
    <property type="project" value="UniProtKB-UniRule"/>
</dbReference>
<dbReference type="GO" id="GO:0003735">
    <property type="term" value="F:structural constituent of ribosome"/>
    <property type="evidence" value="ECO:0007669"/>
    <property type="project" value="InterPro"/>
</dbReference>
<dbReference type="GO" id="GO:0006412">
    <property type="term" value="P:translation"/>
    <property type="evidence" value="ECO:0007669"/>
    <property type="project" value="UniProtKB-UniRule"/>
</dbReference>
<dbReference type="FunFam" id="2.40.30.10:FF:000004">
    <property type="entry name" value="50S ribosomal protein L3"/>
    <property type="match status" value="1"/>
</dbReference>
<dbReference type="FunFam" id="3.30.160.810:FF:000001">
    <property type="entry name" value="50S ribosomal protein L3"/>
    <property type="match status" value="1"/>
</dbReference>
<dbReference type="Gene3D" id="3.30.160.810">
    <property type="match status" value="1"/>
</dbReference>
<dbReference type="Gene3D" id="2.40.30.10">
    <property type="entry name" value="Translation factors"/>
    <property type="match status" value="1"/>
</dbReference>
<dbReference type="HAMAP" id="MF_01325_B">
    <property type="entry name" value="Ribosomal_uL3_B"/>
    <property type="match status" value="1"/>
</dbReference>
<dbReference type="InterPro" id="IPR000597">
    <property type="entry name" value="Ribosomal_uL3"/>
</dbReference>
<dbReference type="InterPro" id="IPR019927">
    <property type="entry name" value="Ribosomal_uL3_bac/org-type"/>
</dbReference>
<dbReference type="InterPro" id="IPR019926">
    <property type="entry name" value="Ribosomal_uL3_CS"/>
</dbReference>
<dbReference type="InterPro" id="IPR009000">
    <property type="entry name" value="Transl_B-barrel_sf"/>
</dbReference>
<dbReference type="NCBIfam" id="TIGR03625">
    <property type="entry name" value="L3_bact"/>
    <property type="match status" value="1"/>
</dbReference>
<dbReference type="PANTHER" id="PTHR11229">
    <property type="entry name" value="50S RIBOSOMAL PROTEIN L3"/>
    <property type="match status" value="1"/>
</dbReference>
<dbReference type="PANTHER" id="PTHR11229:SF16">
    <property type="entry name" value="LARGE RIBOSOMAL SUBUNIT PROTEIN UL3C"/>
    <property type="match status" value="1"/>
</dbReference>
<dbReference type="Pfam" id="PF00297">
    <property type="entry name" value="Ribosomal_L3"/>
    <property type="match status" value="1"/>
</dbReference>
<dbReference type="SUPFAM" id="SSF50447">
    <property type="entry name" value="Translation proteins"/>
    <property type="match status" value="1"/>
</dbReference>
<dbReference type="PROSITE" id="PS00474">
    <property type="entry name" value="RIBOSOMAL_L3"/>
    <property type="match status" value="1"/>
</dbReference>
<keyword id="KW-0488">Methylation</keyword>
<keyword id="KW-0687">Ribonucleoprotein</keyword>
<keyword id="KW-0689">Ribosomal protein</keyword>
<keyword id="KW-0694">RNA-binding</keyword>
<keyword id="KW-0699">rRNA-binding</keyword>
<feature type="chain" id="PRO_1000052058" description="Large ribosomal subunit protein uL3">
    <location>
        <begin position="1"/>
        <end position="208"/>
    </location>
</feature>
<feature type="modified residue" description="N5-methylglutamine" evidence="1">
    <location>
        <position position="149"/>
    </location>
</feature>
<evidence type="ECO:0000255" key="1">
    <source>
        <dbReference type="HAMAP-Rule" id="MF_01325"/>
    </source>
</evidence>
<evidence type="ECO:0000305" key="2"/>